<name>RECA_ROSS1</name>
<sequence>MALSPEKEKALAAAMSQIDRKYGKGSIMRMGEVSSKLAIEVIPTGSIALDIALGVGGVPRGRVVEIYGPESSGKTTLAQHIIAEAQKMGGIAAFIDAEHAFDPVYAARCGVDVNNLLVSQPDYGEQALEICEALVRSNAVDVVVVDSVAALVPRAEIEGDMGDSLPGLQARLMSQALRKLSGAISKSRAVVIFLNQLRLKIGVMFGSPETTTGGQALKFYASVRMDIRRIETLKNGQETIGSRTRVKVVKNKVAPPFRQAEFDIMHNEGISRAGNILDVGVELDIIRKSGAWFYLGDDRLGQGRENAKQFLNENPALADEIERLIRAHAMAAPISIVSPKEDDAVEDAGLFEE</sequence>
<feature type="chain" id="PRO_1000047986" description="Protein RecA">
    <location>
        <begin position="1"/>
        <end position="353"/>
    </location>
</feature>
<feature type="binding site" evidence="1">
    <location>
        <begin position="68"/>
        <end position="75"/>
    </location>
    <ligand>
        <name>ATP</name>
        <dbReference type="ChEBI" id="CHEBI:30616"/>
    </ligand>
</feature>
<organism>
    <name type="scientific">Roseiflexus sp. (strain RS-1)</name>
    <dbReference type="NCBI Taxonomy" id="357808"/>
    <lineage>
        <taxon>Bacteria</taxon>
        <taxon>Bacillati</taxon>
        <taxon>Chloroflexota</taxon>
        <taxon>Chloroflexia</taxon>
        <taxon>Chloroflexales</taxon>
        <taxon>Roseiflexineae</taxon>
        <taxon>Roseiflexaceae</taxon>
        <taxon>Roseiflexus</taxon>
    </lineage>
</organism>
<keyword id="KW-0067">ATP-binding</keyword>
<keyword id="KW-0963">Cytoplasm</keyword>
<keyword id="KW-0227">DNA damage</keyword>
<keyword id="KW-0233">DNA recombination</keyword>
<keyword id="KW-0234">DNA repair</keyword>
<keyword id="KW-0238">DNA-binding</keyword>
<keyword id="KW-0547">Nucleotide-binding</keyword>
<keyword id="KW-0742">SOS response</keyword>
<reference key="1">
    <citation type="submission" date="2007-04" db="EMBL/GenBank/DDBJ databases">
        <title>Complete sequence of Roseiflexus sp. RS-1.</title>
        <authorList>
            <consortium name="US DOE Joint Genome Institute"/>
            <person name="Copeland A."/>
            <person name="Lucas S."/>
            <person name="Lapidus A."/>
            <person name="Barry K."/>
            <person name="Detter J.C."/>
            <person name="Glavina del Rio T."/>
            <person name="Hammon N."/>
            <person name="Israni S."/>
            <person name="Dalin E."/>
            <person name="Tice H."/>
            <person name="Pitluck S."/>
            <person name="Chertkov O."/>
            <person name="Brettin T."/>
            <person name="Bruce D."/>
            <person name="Han C."/>
            <person name="Schmutz J."/>
            <person name="Larimer F."/>
            <person name="Land M."/>
            <person name="Hauser L."/>
            <person name="Kyrpides N."/>
            <person name="Mikhailova N."/>
            <person name="Bryant D.A."/>
            <person name="Richardson P."/>
        </authorList>
    </citation>
    <scope>NUCLEOTIDE SEQUENCE [LARGE SCALE GENOMIC DNA]</scope>
    <source>
        <strain>RS-1</strain>
    </source>
</reference>
<evidence type="ECO:0000255" key="1">
    <source>
        <dbReference type="HAMAP-Rule" id="MF_00268"/>
    </source>
</evidence>
<gene>
    <name evidence="1" type="primary">recA</name>
    <name type="ordered locus">RoseRS_3118</name>
</gene>
<proteinExistence type="inferred from homology"/>
<protein>
    <recommendedName>
        <fullName evidence="1">Protein RecA</fullName>
    </recommendedName>
    <alternativeName>
        <fullName evidence="1">Recombinase A</fullName>
    </alternativeName>
</protein>
<accession>A5UXX8</accession>
<comment type="function">
    <text evidence="1">Can catalyze the hydrolysis of ATP in the presence of single-stranded DNA, the ATP-dependent uptake of single-stranded DNA by duplex DNA, and the ATP-dependent hybridization of homologous single-stranded DNAs. It interacts with LexA causing its activation and leading to its autocatalytic cleavage.</text>
</comment>
<comment type="subcellular location">
    <subcellularLocation>
        <location evidence="1">Cytoplasm</location>
    </subcellularLocation>
</comment>
<comment type="similarity">
    <text evidence="1">Belongs to the RecA family.</text>
</comment>
<dbReference type="EMBL" id="CP000686">
    <property type="protein sequence ID" value="ABQ91481.1"/>
    <property type="molecule type" value="Genomic_DNA"/>
</dbReference>
<dbReference type="RefSeq" id="WP_011957825.1">
    <property type="nucleotide sequence ID" value="NC_009523.1"/>
</dbReference>
<dbReference type="SMR" id="A5UXX8"/>
<dbReference type="STRING" id="357808.RoseRS_3118"/>
<dbReference type="KEGG" id="rrs:RoseRS_3118"/>
<dbReference type="eggNOG" id="COG0468">
    <property type="taxonomic scope" value="Bacteria"/>
</dbReference>
<dbReference type="HOGENOM" id="CLU_040469_1_2_0"/>
<dbReference type="OrthoDB" id="9776733at2"/>
<dbReference type="Proteomes" id="UP000006554">
    <property type="component" value="Chromosome"/>
</dbReference>
<dbReference type="GO" id="GO:0005829">
    <property type="term" value="C:cytosol"/>
    <property type="evidence" value="ECO:0007669"/>
    <property type="project" value="TreeGrafter"/>
</dbReference>
<dbReference type="GO" id="GO:0005524">
    <property type="term" value="F:ATP binding"/>
    <property type="evidence" value="ECO:0007669"/>
    <property type="project" value="UniProtKB-UniRule"/>
</dbReference>
<dbReference type="GO" id="GO:0016887">
    <property type="term" value="F:ATP hydrolysis activity"/>
    <property type="evidence" value="ECO:0007669"/>
    <property type="project" value="InterPro"/>
</dbReference>
<dbReference type="GO" id="GO:0140664">
    <property type="term" value="F:ATP-dependent DNA damage sensor activity"/>
    <property type="evidence" value="ECO:0007669"/>
    <property type="project" value="InterPro"/>
</dbReference>
<dbReference type="GO" id="GO:0003684">
    <property type="term" value="F:damaged DNA binding"/>
    <property type="evidence" value="ECO:0007669"/>
    <property type="project" value="UniProtKB-UniRule"/>
</dbReference>
<dbReference type="GO" id="GO:0003697">
    <property type="term" value="F:single-stranded DNA binding"/>
    <property type="evidence" value="ECO:0007669"/>
    <property type="project" value="UniProtKB-UniRule"/>
</dbReference>
<dbReference type="GO" id="GO:0006310">
    <property type="term" value="P:DNA recombination"/>
    <property type="evidence" value="ECO:0007669"/>
    <property type="project" value="UniProtKB-UniRule"/>
</dbReference>
<dbReference type="GO" id="GO:0006281">
    <property type="term" value="P:DNA repair"/>
    <property type="evidence" value="ECO:0007669"/>
    <property type="project" value="UniProtKB-UniRule"/>
</dbReference>
<dbReference type="GO" id="GO:0009432">
    <property type="term" value="P:SOS response"/>
    <property type="evidence" value="ECO:0007669"/>
    <property type="project" value="UniProtKB-UniRule"/>
</dbReference>
<dbReference type="CDD" id="cd00983">
    <property type="entry name" value="RecA"/>
    <property type="match status" value="1"/>
</dbReference>
<dbReference type="FunFam" id="3.40.50.300:FF:000087">
    <property type="entry name" value="Recombinase RecA"/>
    <property type="match status" value="1"/>
</dbReference>
<dbReference type="Gene3D" id="3.40.50.300">
    <property type="entry name" value="P-loop containing nucleotide triphosphate hydrolases"/>
    <property type="match status" value="1"/>
</dbReference>
<dbReference type="HAMAP" id="MF_00268">
    <property type="entry name" value="RecA"/>
    <property type="match status" value="1"/>
</dbReference>
<dbReference type="InterPro" id="IPR003593">
    <property type="entry name" value="AAA+_ATPase"/>
</dbReference>
<dbReference type="InterPro" id="IPR013765">
    <property type="entry name" value="DNA_recomb/repair_RecA"/>
</dbReference>
<dbReference type="InterPro" id="IPR020584">
    <property type="entry name" value="DNA_recomb/repair_RecA_CS"/>
</dbReference>
<dbReference type="InterPro" id="IPR027417">
    <property type="entry name" value="P-loop_NTPase"/>
</dbReference>
<dbReference type="InterPro" id="IPR049261">
    <property type="entry name" value="RecA-like_C"/>
</dbReference>
<dbReference type="InterPro" id="IPR049428">
    <property type="entry name" value="RecA-like_N"/>
</dbReference>
<dbReference type="InterPro" id="IPR020588">
    <property type="entry name" value="RecA_ATP-bd"/>
</dbReference>
<dbReference type="InterPro" id="IPR023400">
    <property type="entry name" value="RecA_C_sf"/>
</dbReference>
<dbReference type="InterPro" id="IPR020587">
    <property type="entry name" value="RecA_monomer-monomer_interface"/>
</dbReference>
<dbReference type="NCBIfam" id="TIGR02012">
    <property type="entry name" value="tigrfam_recA"/>
    <property type="match status" value="1"/>
</dbReference>
<dbReference type="PANTHER" id="PTHR45900:SF1">
    <property type="entry name" value="MITOCHONDRIAL DNA REPAIR PROTEIN RECA HOMOLOG-RELATED"/>
    <property type="match status" value="1"/>
</dbReference>
<dbReference type="PANTHER" id="PTHR45900">
    <property type="entry name" value="RECA"/>
    <property type="match status" value="1"/>
</dbReference>
<dbReference type="Pfam" id="PF00154">
    <property type="entry name" value="RecA"/>
    <property type="match status" value="1"/>
</dbReference>
<dbReference type="Pfam" id="PF21096">
    <property type="entry name" value="RecA_C"/>
    <property type="match status" value="1"/>
</dbReference>
<dbReference type="PRINTS" id="PR00142">
    <property type="entry name" value="RECA"/>
</dbReference>
<dbReference type="SMART" id="SM00382">
    <property type="entry name" value="AAA"/>
    <property type="match status" value="1"/>
</dbReference>
<dbReference type="SUPFAM" id="SSF52540">
    <property type="entry name" value="P-loop containing nucleoside triphosphate hydrolases"/>
    <property type="match status" value="1"/>
</dbReference>
<dbReference type="SUPFAM" id="SSF54752">
    <property type="entry name" value="RecA protein, C-terminal domain"/>
    <property type="match status" value="1"/>
</dbReference>
<dbReference type="PROSITE" id="PS00321">
    <property type="entry name" value="RECA_1"/>
    <property type="match status" value="1"/>
</dbReference>
<dbReference type="PROSITE" id="PS50162">
    <property type="entry name" value="RECA_2"/>
    <property type="match status" value="1"/>
</dbReference>
<dbReference type="PROSITE" id="PS50163">
    <property type="entry name" value="RECA_3"/>
    <property type="match status" value="1"/>
</dbReference>